<name>VSP5_PROMU</name>
<accession>Q91511</accession>
<evidence type="ECO:0000250" key="1"/>
<evidence type="ECO:0000255" key="2"/>
<evidence type="ECO:0000255" key="3">
    <source>
        <dbReference type="PROSITE-ProRule" id="PRU00274"/>
    </source>
</evidence>
<evidence type="ECO:0000269" key="4">
    <source>
    </source>
</evidence>
<evidence type="ECO:0000269" key="5">
    <source>
    </source>
</evidence>
<evidence type="ECO:0000269" key="6">
    <source>
    </source>
</evidence>
<evidence type="ECO:0000305" key="7"/>
<evidence type="ECO:0000305" key="8">
    <source>
    </source>
</evidence>
<evidence type="ECO:0000305" key="9">
    <source>
    </source>
</evidence>
<dbReference type="EC" id="3.4.21.-"/>
<dbReference type="EMBL" id="X83225">
    <property type="protein sequence ID" value="CAA58225.1"/>
    <property type="molecule type" value="mRNA"/>
</dbReference>
<dbReference type="SMR" id="Q91511"/>
<dbReference type="MEROPS" id="S01.345"/>
<dbReference type="GO" id="GO:0005576">
    <property type="term" value="C:extracellular region"/>
    <property type="evidence" value="ECO:0007669"/>
    <property type="project" value="UniProtKB-SubCell"/>
</dbReference>
<dbReference type="GO" id="GO:0030141">
    <property type="term" value="C:secretory granule"/>
    <property type="evidence" value="ECO:0007669"/>
    <property type="project" value="TreeGrafter"/>
</dbReference>
<dbReference type="GO" id="GO:0004252">
    <property type="term" value="F:serine-type endopeptidase activity"/>
    <property type="evidence" value="ECO:0007669"/>
    <property type="project" value="InterPro"/>
</dbReference>
<dbReference type="GO" id="GO:0090729">
    <property type="term" value="F:toxin activity"/>
    <property type="evidence" value="ECO:0007669"/>
    <property type="project" value="UniProtKB-KW"/>
</dbReference>
<dbReference type="GO" id="GO:0006508">
    <property type="term" value="P:proteolysis"/>
    <property type="evidence" value="ECO:0007669"/>
    <property type="project" value="UniProtKB-KW"/>
</dbReference>
<dbReference type="GO" id="GO:0008217">
    <property type="term" value="P:regulation of blood pressure"/>
    <property type="evidence" value="ECO:0007669"/>
    <property type="project" value="UniProtKB-KW"/>
</dbReference>
<dbReference type="CDD" id="cd00190">
    <property type="entry name" value="Tryp_SPc"/>
    <property type="match status" value="1"/>
</dbReference>
<dbReference type="FunFam" id="2.40.10.10:FF:000158">
    <property type="entry name" value="Thrombin-like enzyme saxthrombin"/>
    <property type="match status" value="1"/>
</dbReference>
<dbReference type="FunFam" id="2.40.10.10:FF:000153">
    <property type="entry name" value="Venom plasminogen activator TSV-PA"/>
    <property type="match status" value="1"/>
</dbReference>
<dbReference type="Gene3D" id="2.40.10.10">
    <property type="entry name" value="Trypsin-like serine proteases"/>
    <property type="match status" value="2"/>
</dbReference>
<dbReference type="InterPro" id="IPR009003">
    <property type="entry name" value="Peptidase_S1_PA"/>
</dbReference>
<dbReference type="InterPro" id="IPR043504">
    <property type="entry name" value="Peptidase_S1_PA_chymotrypsin"/>
</dbReference>
<dbReference type="InterPro" id="IPR001314">
    <property type="entry name" value="Peptidase_S1A"/>
</dbReference>
<dbReference type="InterPro" id="IPR001254">
    <property type="entry name" value="Trypsin_dom"/>
</dbReference>
<dbReference type="InterPro" id="IPR018114">
    <property type="entry name" value="TRYPSIN_HIS"/>
</dbReference>
<dbReference type="InterPro" id="IPR033116">
    <property type="entry name" value="TRYPSIN_SER"/>
</dbReference>
<dbReference type="PANTHER" id="PTHR24271:SF47">
    <property type="entry name" value="KALLIKREIN-1"/>
    <property type="match status" value="1"/>
</dbReference>
<dbReference type="PANTHER" id="PTHR24271">
    <property type="entry name" value="KALLIKREIN-RELATED"/>
    <property type="match status" value="1"/>
</dbReference>
<dbReference type="Pfam" id="PF00089">
    <property type="entry name" value="Trypsin"/>
    <property type="match status" value="1"/>
</dbReference>
<dbReference type="PRINTS" id="PR00722">
    <property type="entry name" value="CHYMOTRYPSIN"/>
</dbReference>
<dbReference type="SMART" id="SM00020">
    <property type="entry name" value="Tryp_SPc"/>
    <property type="match status" value="1"/>
</dbReference>
<dbReference type="SUPFAM" id="SSF50494">
    <property type="entry name" value="Trypsin-like serine proteases"/>
    <property type="match status" value="1"/>
</dbReference>
<dbReference type="PROSITE" id="PS50240">
    <property type="entry name" value="TRYPSIN_DOM"/>
    <property type="match status" value="1"/>
</dbReference>
<dbReference type="PROSITE" id="PS00134">
    <property type="entry name" value="TRYPSIN_HIS"/>
    <property type="match status" value="1"/>
</dbReference>
<dbReference type="PROSITE" id="PS00135">
    <property type="entry name" value="TRYPSIN_SER"/>
    <property type="match status" value="1"/>
</dbReference>
<reference key="1">
    <citation type="journal article" date="1994" name="Biochem. Biophys. Res. Commun.">
        <title>Characterization of one novel venom protease with beta-fibrinogenase activity from the Taiwan habu (Trimeresurus mucrosquamatus): purification and cDNA sequence analysis.</title>
        <authorList>
            <person name="Hung C.-C."/>
            <person name="Huang K.F."/>
            <person name="Chiou S.-H."/>
        </authorList>
    </citation>
    <scope>NUCLEOTIDE SEQUENCE [MRNA]</scope>
    <scope>FUNCTION</scope>
    <scope>SUBUNIT</scope>
    <source>
        <tissue>Venom</tissue>
        <tissue>Venom gland</tissue>
    </source>
</reference>
<reference key="2">
    <citation type="journal article" date="2000" name="Biochem. Biophys. Res. Commun.">
        <title>Expression of a kallikrein-like protease from the snake venom: engineering of autocatalytic site in the fusion protein to facilitate protein refolding.</title>
        <authorList>
            <person name="Hung C.C."/>
            <person name="Chiou S.H."/>
        </authorList>
    </citation>
    <scope>FUNCTION</scope>
    <scope>PEPTIDASE ACTIVITY</scope>
</reference>
<reference key="3">
    <citation type="journal article" date="2001" name="Biochem. Biophys. Res. Commun.">
        <title>Fibrinogenolytic proteases isolated from the snake venom of Taiwan habu: serine proteases with kallikrein-like and angiotensin-degrading activities.</title>
        <authorList>
            <person name="Hung C.C."/>
            <person name="Chiou S.H."/>
        </authorList>
    </citation>
    <scope>FUNCTION</scope>
    <scope>BIOPHYSICOCHEMICAL PROPERTIES</scope>
    <source>
        <tissue>Venom</tissue>
    </source>
</reference>
<sequence length="257" mass="28164">MVLIRVLANLLILQLSYAQKSSELIIGGDECNINEHPFLVLVYYDDYQCGGTLINEEWVLTAAHCNGENMEIYLGMHSKKVPNKDRRRRVPKEKFFCDSSKNYTKWNKDIMLIRLNRPVRKSAHIAPLSLPSSPPSVGSVCRIMGWGTISPTKVTLPDVPRCANINLLDYEVCRAAYAGLPATSRTLCAGILEGGKDSCGGDSGGPLICNGQFQGIVSWGGDPCAQPHEPGLYTNVFDHLDWIKGIIAGNTDATCPP</sequence>
<comment type="function">
    <text evidence="4 5 6">Snake venom serine protease with strong beta-fibrinogenolytic activities, angiotensin I (AGT)-degrading activities and strong kallikrein-like activities in vitro, releasing bradykinin from kininogen (KNG1). Intravenous injection mildly lowers blood pressure in experimental rats, which may be explained by the action on angiotensin I and kininogen. Exhibits amidase activity against N-benzoyl-Pro-Phe-Arg-p-nitroanilide in vitro (PubMed:10973823).</text>
</comment>
<comment type="biophysicochemical properties">
    <temperatureDependence>
        <text evidence="5">Heat-stable to about 95 degrees Celsius.</text>
    </temperatureDependence>
</comment>
<comment type="subunit">
    <text evidence="6">Monomer.</text>
</comment>
<comment type="subcellular location">
    <subcellularLocation>
        <location>Secreted</location>
    </subcellularLocation>
</comment>
<comment type="tissue specificity">
    <text>Expressed by the venom gland.</text>
</comment>
<comment type="miscellaneous">
    <text evidence="8 9">Negative results: does not have activity on gamma-chains of fibrinogen (FGG) (PubMed:7811255), and does not coagulate human plasma. Does not induce or inhibit platelet aggregation (PubMed:11237764).</text>
</comment>
<comment type="similarity">
    <text evidence="3">Belongs to the peptidase S1 family. Snake venom subfamily.</text>
</comment>
<comment type="caution">
    <text evidence="7">The correspondence between the sequence (indicated in PubMed:7811255) and the function (from PubMed:11237764) has not been clearly demonstrated.</text>
</comment>
<organism>
    <name type="scientific">Protobothrops mucrosquamatus</name>
    <name type="common">Taiwan habu</name>
    <name type="synonym">Trimeresurus mucrosquamatus</name>
    <dbReference type="NCBI Taxonomy" id="103944"/>
    <lineage>
        <taxon>Eukaryota</taxon>
        <taxon>Metazoa</taxon>
        <taxon>Chordata</taxon>
        <taxon>Craniata</taxon>
        <taxon>Vertebrata</taxon>
        <taxon>Euteleostomi</taxon>
        <taxon>Lepidosauria</taxon>
        <taxon>Squamata</taxon>
        <taxon>Bifurcata</taxon>
        <taxon>Unidentata</taxon>
        <taxon>Episquamata</taxon>
        <taxon>Toxicofera</taxon>
        <taxon>Serpentes</taxon>
        <taxon>Colubroidea</taxon>
        <taxon>Viperidae</taxon>
        <taxon>Crotalinae</taxon>
        <taxon>Protobothrops</taxon>
    </lineage>
</organism>
<protein>
    <recommendedName>
        <fullName>Beta-fibrinogenase mucrofibrase-5</fullName>
        <ecNumber>3.4.21.-</ecNumber>
    </recommendedName>
    <alternativeName>
        <fullName>Snake venom serine protease</fullName>
        <shortName>SVSP</shortName>
    </alternativeName>
    <alternativeName>
        <fullName>Tm-5</fullName>
    </alternativeName>
    <alternativeName>
        <fullName>Tm-IIG</fullName>
    </alternativeName>
</protein>
<keyword id="KW-1015">Disulfide bond</keyword>
<keyword id="KW-1206">Fibrinogenolytic toxin</keyword>
<keyword id="KW-0325">Glycoprotein</keyword>
<keyword id="KW-1199">Hemostasis impairing toxin</keyword>
<keyword id="KW-0378">Hydrolase</keyword>
<keyword id="KW-0382">Hypotensive agent</keyword>
<keyword id="KW-0645">Protease</keyword>
<keyword id="KW-0964">Secreted</keyword>
<keyword id="KW-0720">Serine protease</keyword>
<keyword id="KW-0732">Signal</keyword>
<keyword id="KW-0800">Toxin</keyword>
<keyword id="KW-0865">Zymogen</keyword>
<feature type="signal peptide" evidence="1">
    <location>
        <begin position="1"/>
        <end position="18"/>
    </location>
</feature>
<feature type="propeptide" id="PRO_0000028415" evidence="1">
    <location>
        <begin position="19"/>
        <end position="24"/>
    </location>
</feature>
<feature type="chain" id="PRO_0000028416" description="Beta-fibrinogenase mucrofibrase-5">
    <location>
        <begin position="25"/>
        <end position="257"/>
    </location>
</feature>
<feature type="domain" description="Peptidase S1" evidence="3">
    <location>
        <begin position="25"/>
        <end position="248"/>
    </location>
</feature>
<feature type="active site" description="Charge relay system" evidence="1">
    <location>
        <position position="64"/>
    </location>
</feature>
<feature type="active site" description="Charge relay system" evidence="1">
    <location>
        <position position="109"/>
    </location>
</feature>
<feature type="active site" description="Charge relay system" evidence="1">
    <location>
        <position position="203"/>
    </location>
</feature>
<feature type="glycosylation site" description="N-linked (GlcNAc...) asparagine" evidence="2">
    <location>
        <position position="102"/>
    </location>
</feature>
<feature type="disulfide bond" evidence="3">
    <location>
        <begin position="31"/>
        <end position="162"/>
    </location>
</feature>
<feature type="disulfide bond" evidence="3">
    <location>
        <begin position="49"/>
        <end position="65"/>
    </location>
</feature>
<feature type="disulfide bond" evidence="3">
    <location>
        <begin position="97"/>
        <end position="255"/>
    </location>
</feature>
<feature type="disulfide bond" evidence="3">
    <location>
        <begin position="141"/>
        <end position="209"/>
    </location>
</feature>
<feature type="disulfide bond" evidence="3">
    <location>
        <begin position="173"/>
        <end position="188"/>
    </location>
</feature>
<feature type="disulfide bond" evidence="3">
    <location>
        <begin position="199"/>
        <end position="224"/>
    </location>
</feature>
<proteinExistence type="evidence at protein level"/>